<organism>
    <name type="scientific">Pseudomonas putida (strain GB-1)</name>
    <dbReference type="NCBI Taxonomy" id="76869"/>
    <lineage>
        <taxon>Bacteria</taxon>
        <taxon>Pseudomonadati</taxon>
        <taxon>Pseudomonadota</taxon>
        <taxon>Gammaproteobacteria</taxon>
        <taxon>Pseudomonadales</taxon>
        <taxon>Pseudomonadaceae</taxon>
        <taxon>Pseudomonas</taxon>
    </lineage>
</organism>
<feature type="chain" id="PRO_1000078544" description="Glycine--tRNA ligase beta subunit">
    <location>
        <begin position="1"/>
        <end position="683"/>
    </location>
</feature>
<name>SYGB_PSEPG</name>
<accession>B0KF22</accession>
<dbReference type="EC" id="6.1.1.14" evidence="1"/>
<dbReference type="EMBL" id="CP000926">
    <property type="protein sequence ID" value="ABY95992.1"/>
    <property type="molecule type" value="Genomic_DNA"/>
</dbReference>
<dbReference type="RefSeq" id="WP_012269868.1">
    <property type="nucleotide sequence ID" value="NC_010322.1"/>
</dbReference>
<dbReference type="SMR" id="B0KF22"/>
<dbReference type="KEGG" id="ppg:PputGB1_0076"/>
<dbReference type="eggNOG" id="COG0751">
    <property type="taxonomic scope" value="Bacteria"/>
</dbReference>
<dbReference type="HOGENOM" id="CLU_007220_2_2_6"/>
<dbReference type="Proteomes" id="UP000002157">
    <property type="component" value="Chromosome"/>
</dbReference>
<dbReference type="GO" id="GO:0005829">
    <property type="term" value="C:cytosol"/>
    <property type="evidence" value="ECO:0007669"/>
    <property type="project" value="TreeGrafter"/>
</dbReference>
<dbReference type="GO" id="GO:0004814">
    <property type="term" value="F:arginine-tRNA ligase activity"/>
    <property type="evidence" value="ECO:0007669"/>
    <property type="project" value="InterPro"/>
</dbReference>
<dbReference type="GO" id="GO:0005524">
    <property type="term" value="F:ATP binding"/>
    <property type="evidence" value="ECO:0007669"/>
    <property type="project" value="UniProtKB-UniRule"/>
</dbReference>
<dbReference type="GO" id="GO:0004820">
    <property type="term" value="F:glycine-tRNA ligase activity"/>
    <property type="evidence" value="ECO:0007669"/>
    <property type="project" value="UniProtKB-UniRule"/>
</dbReference>
<dbReference type="GO" id="GO:0006420">
    <property type="term" value="P:arginyl-tRNA aminoacylation"/>
    <property type="evidence" value="ECO:0007669"/>
    <property type="project" value="InterPro"/>
</dbReference>
<dbReference type="GO" id="GO:0006426">
    <property type="term" value="P:glycyl-tRNA aminoacylation"/>
    <property type="evidence" value="ECO:0007669"/>
    <property type="project" value="UniProtKB-UniRule"/>
</dbReference>
<dbReference type="HAMAP" id="MF_00255">
    <property type="entry name" value="Gly_tRNA_synth_beta"/>
    <property type="match status" value="1"/>
</dbReference>
<dbReference type="InterPro" id="IPR008909">
    <property type="entry name" value="DALR_anticod-bd"/>
</dbReference>
<dbReference type="InterPro" id="IPR015944">
    <property type="entry name" value="Gly-tRNA-synth_bsu"/>
</dbReference>
<dbReference type="InterPro" id="IPR006194">
    <property type="entry name" value="Gly-tRNA-synth_heterodimer"/>
</dbReference>
<dbReference type="NCBIfam" id="TIGR00211">
    <property type="entry name" value="glyS"/>
    <property type="match status" value="1"/>
</dbReference>
<dbReference type="PANTHER" id="PTHR30075:SF2">
    <property type="entry name" value="GLYCINE--TRNA LIGASE, CHLOROPLASTIC_MITOCHONDRIAL 2"/>
    <property type="match status" value="1"/>
</dbReference>
<dbReference type="PANTHER" id="PTHR30075">
    <property type="entry name" value="GLYCYL-TRNA SYNTHETASE"/>
    <property type="match status" value="1"/>
</dbReference>
<dbReference type="Pfam" id="PF05746">
    <property type="entry name" value="DALR_1"/>
    <property type="match status" value="1"/>
</dbReference>
<dbReference type="Pfam" id="PF02092">
    <property type="entry name" value="tRNA_synt_2f"/>
    <property type="match status" value="1"/>
</dbReference>
<dbReference type="PRINTS" id="PR01045">
    <property type="entry name" value="TRNASYNTHGB"/>
</dbReference>
<dbReference type="SUPFAM" id="SSF109604">
    <property type="entry name" value="HD-domain/PDEase-like"/>
    <property type="match status" value="1"/>
</dbReference>
<dbReference type="PROSITE" id="PS50861">
    <property type="entry name" value="AA_TRNA_LIGASE_II_GLYAB"/>
    <property type="match status" value="1"/>
</dbReference>
<protein>
    <recommendedName>
        <fullName evidence="1">Glycine--tRNA ligase beta subunit</fullName>
        <ecNumber evidence="1">6.1.1.14</ecNumber>
    </recommendedName>
    <alternativeName>
        <fullName evidence="1">Glycyl-tRNA synthetase beta subunit</fullName>
        <shortName evidence="1">GlyRS</shortName>
    </alternativeName>
</protein>
<sequence>MSAQDFLVELGTEELPPKALASLGDAFLAGIEKGLQAAGLNYTGKQVYAAPRRLAVLIRQLDVQQPDRSINIDGPPMQAAFKDGEPTQAALGFAKKCGVELAEIDQSGAKLRFSQHIPGKATASLLPTIIEDSLNDLPIPKRMRWAASREEFVRPTQWLVMLLGDQVVDCTILSQKAGRESRGHRFHHPENVVITTPANYVEDLRKAYVLADFAERRELISKRTAELAMQQEGTAIVPPALLDEVTALVEWPVPLVCSFEERFLEVPQEALITTMQDNQKYFCLLDSEGKLLPRFITVANVESRDPKQIVQGNEKVVRPRLTDAEFFFKQDKKQPLETFNERLKNVVFQAQLGTVYDKAERVSKLAAFIAPLIGGDAQRAGRAGLLSKCDLATEMVGEFPEMQGVAGYYYALNDGEPQDVALALNEQYMPRGAGAELPQTLTGAAVAIADKLDTLVGIFGIGMLPTGSKDPYALRRAALGVLRILIEKQLDLNLTGAVEFAVKQFGAKVKAAGLAEQVLEFIFDRLRARYEDEGIDVATYLSVRALQPGSALDFDQRVQAVQAFRKLPEAEALAAVNKRVSNLLSKAEGAIAEQVEPKYFDNANEFSLYSAIQQADQAVQPMAAARQYSESLARLAALRDPVDAFFEAVMVNAEDAKVRANRYALLSRLRGLFLGVADISLLG</sequence>
<keyword id="KW-0030">Aminoacyl-tRNA synthetase</keyword>
<keyword id="KW-0067">ATP-binding</keyword>
<keyword id="KW-0963">Cytoplasm</keyword>
<keyword id="KW-0436">Ligase</keyword>
<keyword id="KW-0547">Nucleotide-binding</keyword>
<keyword id="KW-0648">Protein biosynthesis</keyword>
<gene>
    <name evidence="1" type="primary">glyS</name>
    <name type="ordered locus">PputGB1_0076</name>
</gene>
<evidence type="ECO:0000255" key="1">
    <source>
        <dbReference type="HAMAP-Rule" id="MF_00255"/>
    </source>
</evidence>
<comment type="catalytic activity">
    <reaction evidence="1">
        <text>tRNA(Gly) + glycine + ATP = glycyl-tRNA(Gly) + AMP + diphosphate</text>
        <dbReference type="Rhea" id="RHEA:16013"/>
        <dbReference type="Rhea" id="RHEA-COMP:9664"/>
        <dbReference type="Rhea" id="RHEA-COMP:9683"/>
        <dbReference type="ChEBI" id="CHEBI:30616"/>
        <dbReference type="ChEBI" id="CHEBI:33019"/>
        <dbReference type="ChEBI" id="CHEBI:57305"/>
        <dbReference type="ChEBI" id="CHEBI:78442"/>
        <dbReference type="ChEBI" id="CHEBI:78522"/>
        <dbReference type="ChEBI" id="CHEBI:456215"/>
        <dbReference type="EC" id="6.1.1.14"/>
    </reaction>
</comment>
<comment type="subunit">
    <text evidence="1">Tetramer of two alpha and two beta subunits.</text>
</comment>
<comment type="subcellular location">
    <subcellularLocation>
        <location evidence="1">Cytoplasm</location>
    </subcellularLocation>
</comment>
<comment type="similarity">
    <text evidence="1">Belongs to the class-II aminoacyl-tRNA synthetase family.</text>
</comment>
<reference key="1">
    <citation type="submission" date="2008-01" db="EMBL/GenBank/DDBJ databases">
        <title>Complete sequence of Pseudomonas putida GB-1.</title>
        <authorList>
            <consortium name="US DOE Joint Genome Institute"/>
            <person name="Copeland A."/>
            <person name="Lucas S."/>
            <person name="Lapidus A."/>
            <person name="Barry K."/>
            <person name="Glavina del Rio T."/>
            <person name="Dalin E."/>
            <person name="Tice H."/>
            <person name="Pitluck S."/>
            <person name="Bruce D."/>
            <person name="Goodwin L."/>
            <person name="Chertkov O."/>
            <person name="Brettin T."/>
            <person name="Detter J.C."/>
            <person name="Han C."/>
            <person name="Kuske C.R."/>
            <person name="Schmutz J."/>
            <person name="Larimer F."/>
            <person name="Land M."/>
            <person name="Hauser L."/>
            <person name="Kyrpides N."/>
            <person name="Kim E."/>
            <person name="McCarthy J.K."/>
            <person name="Richardson P."/>
        </authorList>
    </citation>
    <scope>NUCLEOTIDE SEQUENCE [LARGE SCALE GENOMIC DNA]</scope>
    <source>
        <strain>GB-1</strain>
    </source>
</reference>
<proteinExistence type="inferred from homology"/>